<gene>
    <name evidence="2" type="primary">mvk</name>
    <name type="ORF">DDB_G0272018</name>
</gene>
<protein>
    <recommendedName>
        <fullName evidence="3">Mevalonate kinase</fullName>
        <shortName>MK</shortName>
        <ecNumber evidence="2">2.7.1.36</ecNumber>
    </recommendedName>
</protein>
<sequence>MISNQDNIIQVSAPGKIILFGEHAVVLEKTAIASALSLRTTVTFTPNTNNTLLLDFPDLAGFGVREWSLDEFKKLDHFPNDIDILKPIECSELFQQELNKIIDIKGIHTFLFLFCALTKCTKAYNIKITSDLPIGAGLGSSASFCVSICAGLLKAFDTYICGGCKQCIGGQGQQQQICNEQLNLINLWSLQGEKIMHGTPSGIDNAVATFGKALTFTRKNGYKILENGIPPLRILITNTRVSRSTKTLVEGVIQRSKLYPTLIDPVSNLIDTISSQCIESFNQYHTDKDYEKLQQTMDLMFDMNQHLLSGCYGVGHSSIDTIVSITKSLGFHTKLTGAGGGGCVITLLKQDTTIDQLSNLKLTLSSNGFESWEATIGDPGVSINILPIQK</sequence>
<feature type="chain" id="PRO_0000331601" description="Mevalonate kinase">
    <location>
        <begin position="1"/>
        <end position="390"/>
    </location>
</feature>
<feature type="active site" description="Proton acceptor" evidence="2">
    <location>
        <position position="204"/>
    </location>
</feature>
<feature type="binding site" evidence="1">
    <location>
        <position position="16"/>
    </location>
    <ligand>
        <name>ATP</name>
        <dbReference type="ChEBI" id="CHEBI:30616"/>
    </ligand>
</feature>
<feature type="binding site" evidence="1">
    <location>
        <position position="130"/>
    </location>
    <ligand>
        <name>ATP</name>
        <dbReference type="ChEBI" id="CHEBI:30616"/>
    </ligand>
</feature>
<feature type="binding site" evidence="1">
    <location>
        <begin position="135"/>
        <end position="141"/>
    </location>
    <ligand>
        <name>ATP</name>
        <dbReference type="ChEBI" id="CHEBI:30616"/>
    </ligand>
</feature>
<feature type="binding site" evidence="1">
    <location>
        <position position="141"/>
    </location>
    <ligand>
        <name>Mg(2+)</name>
        <dbReference type="ChEBI" id="CHEBI:18420"/>
    </ligand>
</feature>
<feature type="binding site" evidence="1">
    <location>
        <position position="193"/>
    </location>
    <ligand>
        <name>Mg(2+)</name>
        <dbReference type="ChEBI" id="CHEBI:18420"/>
    </ligand>
</feature>
<keyword id="KW-0067">ATP-binding</keyword>
<keyword id="KW-0963">Cytoplasm</keyword>
<keyword id="KW-0903">Direct protein sequencing</keyword>
<keyword id="KW-0418">Kinase</keyword>
<keyword id="KW-0444">Lipid biosynthesis</keyword>
<keyword id="KW-0443">Lipid metabolism</keyword>
<keyword id="KW-0460">Magnesium</keyword>
<keyword id="KW-0479">Metal-binding</keyword>
<keyword id="KW-0547">Nucleotide-binding</keyword>
<keyword id="KW-1185">Reference proteome</keyword>
<keyword id="KW-0752">Steroid biosynthesis</keyword>
<keyword id="KW-0753">Steroid metabolism</keyword>
<keyword id="KW-0756">Sterol biosynthesis</keyword>
<keyword id="KW-1207">Sterol metabolism</keyword>
<keyword id="KW-0808">Transferase</keyword>
<organism>
    <name type="scientific">Dictyostelium discoideum</name>
    <name type="common">Social amoeba</name>
    <dbReference type="NCBI Taxonomy" id="44689"/>
    <lineage>
        <taxon>Eukaryota</taxon>
        <taxon>Amoebozoa</taxon>
        <taxon>Evosea</taxon>
        <taxon>Eumycetozoa</taxon>
        <taxon>Dictyostelia</taxon>
        <taxon>Dictyosteliales</taxon>
        <taxon>Dictyosteliaceae</taxon>
        <taxon>Dictyostelium</taxon>
    </lineage>
</organism>
<evidence type="ECO:0000250" key="1">
    <source>
        <dbReference type="UniProtKB" id="P17256"/>
    </source>
</evidence>
<evidence type="ECO:0000250" key="2">
    <source>
        <dbReference type="UniProtKB" id="Q03426"/>
    </source>
</evidence>
<evidence type="ECO:0000305" key="3"/>
<reference key="1">
    <citation type="journal article" date="2002" name="Nature">
        <title>Sequence and analysis of chromosome 2 of Dictyostelium discoideum.</title>
        <authorList>
            <person name="Gloeckner G."/>
            <person name="Eichinger L."/>
            <person name="Szafranski K."/>
            <person name="Pachebat J.A."/>
            <person name="Bankier A.T."/>
            <person name="Dear P.H."/>
            <person name="Lehmann R."/>
            <person name="Baumgart C."/>
            <person name="Parra G."/>
            <person name="Abril J.F."/>
            <person name="Guigo R."/>
            <person name="Kumpf K."/>
            <person name="Tunggal B."/>
            <person name="Cox E.C."/>
            <person name="Quail M.A."/>
            <person name="Platzer M."/>
            <person name="Rosenthal A."/>
            <person name="Noegel A.A."/>
        </authorList>
    </citation>
    <scope>NUCLEOTIDE SEQUENCE [LARGE SCALE GENOMIC DNA]</scope>
    <source>
        <strain>AX4</strain>
    </source>
</reference>
<reference key="2">
    <citation type="journal article" date="2005" name="Nature">
        <title>The genome of the social amoeba Dictyostelium discoideum.</title>
        <authorList>
            <person name="Eichinger L."/>
            <person name="Pachebat J.A."/>
            <person name="Gloeckner G."/>
            <person name="Rajandream M.A."/>
            <person name="Sucgang R."/>
            <person name="Berriman M."/>
            <person name="Song J."/>
            <person name="Olsen R."/>
            <person name="Szafranski K."/>
            <person name="Xu Q."/>
            <person name="Tunggal B."/>
            <person name="Kummerfeld S."/>
            <person name="Madera M."/>
            <person name="Konfortov B.A."/>
            <person name="Rivero F."/>
            <person name="Bankier A.T."/>
            <person name="Lehmann R."/>
            <person name="Hamlin N."/>
            <person name="Davies R."/>
            <person name="Gaudet P."/>
            <person name="Fey P."/>
            <person name="Pilcher K."/>
            <person name="Chen G."/>
            <person name="Saunders D."/>
            <person name="Sodergren E.J."/>
            <person name="Davis P."/>
            <person name="Kerhornou A."/>
            <person name="Nie X."/>
            <person name="Hall N."/>
            <person name="Anjard C."/>
            <person name="Hemphill L."/>
            <person name="Bason N."/>
            <person name="Farbrother P."/>
            <person name="Desany B."/>
            <person name="Just E."/>
            <person name="Morio T."/>
            <person name="Rost R."/>
            <person name="Churcher C.M."/>
            <person name="Cooper J."/>
            <person name="Haydock S."/>
            <person name="van Driessche N."/>
            <person name="Cronin A."/>
            <person name="Goodhead I."/>
            <person name="Muzny D.M."/>
            <person name="Mourier T."/>
            <person name="Pain A."/>
            <person name="Lu M."/>
            <person name="Harper D."/>
            <person name="Lindsay R."/>
            <person name="Hauser H."/>
            <person name="James K.D."/>
            <person name="Quiles M."/>
            <person name="Madan Babu M."/>
            <person name="Saito T."/>
            <person name="Buchrieser C."/>
            <person name="Wardroper A."/>
            <person name="Felder M."/>
            <person name="Thangavelu M."/>
            <person name="Johnson D."/>
            <person name="Knights A."/>
            <person name="Loulseged H."/>
            <person name="Mungall K.L."/>
            <person name="Oliver K."/>
            <person name="Price C."/>
            <person name="Quail M.A."/>
            <person name="Urushihara H."/>
            <person name="Hernandez J."/>
            <person name="Rabbinowitsch E."/>
            <person name="Steffen D."/>
            <person name="Sanders M."/>
            <person name="Ma J."/>
            <person name="Kohara Y."/>
            <person name="Sharp S."/>
            <person name="Simmonds M.N."/>
            <person name="Spiegler S."/>
            <person name="Tivey A."/>
            <person name="Sugano S."/>
            <person name="White B."/>
            <person name="Walker D."/>
            <person name="Woodward J.R."/>
            <person name="Winckler T."/>
            <person name="Tanaka Y."/>
            <person name="Shaulsky G."/>
            <person name="Schleicher M."/>
            <person name="Weinstock G.M."/>
            <person name="Rosenthal A."/>
            <person name="Cox E.C."/>
            <person name="Chisholm R.L."/>
            <person name="Gibbs R.A."/>
            <person name="Loomis W.F."/>
            <person name="Platzer M."/>
            <person name="Kay R.R."/>
            <person name="Williams J.G."/>
            <person name="Dear P.H."/>
            <person name="Noegel A.A."/>
            <person name="Barrell B.G."/>
            <person name="Kuspa A."/>
        </authorList>
    </citation>
    <scope>NUCLEOTIDE SEQUENCE [LARGE SCALE GENOMIC DNA]</scope>
    <source>
        <strain>AX4</strain>
    </source>
</reference>
<reference key="3">
    <citation type="submission" date="2010-01" db="UniProtKB">
        <authorList>
            <person name="Bienvenut W.V."/>
            <person name="Veltman D.M."/>
            <person name="Insall R.H."/>
        </authorList>
    </citation>
    <scope>PROTEIN SEQUENCE OF 30-39; 224-233 AND 247-255</scope>
    <scope>IDENTIFICATION BY MASS SPECTROMETRY</scope>
</reference>
<comment type="function">
    <text evidence="2">Catalyzes the phosphorylation of mevalonate to mevalonate 5-phosphate, a key step in isoprenoid biosynthesis.</text>
</comment>
<comment type="catalytic activity">
    <reaction evidence="2">
        <text>(R)-mevalonate + ATP = (R)-5-phosphomevalonate + ADP + H(+)</text>
        <dbReference type="Rhea" id="RHEA:17065"/>
        <dbReference type="ChEBI" id="CHEBI:15378"/>
        <dbReference type="ChEBI" id="CHEBI:30616"/>
        <dbReference type="ChEBI" id="CHEBI:36464"/>
        <dbReference type="ChEBI" id="CHEBI:58146"/>
        <dbReference type="ChEBI" id="CHEBI:456216"/>
        <dbReference type="EC" id="2.7.1.36"/>
    </reaction>
</comment>
<comment type="cofactor">
    <cofactor evidence="1">
        <name>Mg(2+)</name>
        <dbReference type="ChEBI" id="CHEBI:18420"/>
    </cofactor>
</comment>
<comment type="pathway">
    <text>Isoprenoid biosynthesis; isopentenyl diphosphate biosynthesis via mevalonate pathway; isopentenyl diphosphate from (R)-mevalonate: step 1/3.</text>
</comment>
<comment type="subcellular location">
    <subcellularLocation>
        <location evidence="3">Cytoplasm</location>
    </subcellularLocation>
</comment>
<comment type="similarity">
    <text evidence="3">Belongs to the GHMP kinase family. Mevalonate kinase subfamily.</text>
</comment>
<proteinExistence type="evidence at protein level"/>
<accession>Q86AG7</accession>
<accession>Q55A83</accession>
<dbReference type="EC" id="2.7.1.36" evidence="2"/>
<dbReference type="EMBL" id="AAFI02000007">
    <property type="protein sequence ID" value="EAL71443.1"/>
    <property type="molecule type" value="Genomic_DNA"/>
</dbReference>
<dbReference type="RefSeq" id="XP_645383.1">
    <property type="nucleotide sequence ID" value="XM_640291.1"/>
</dbReference>
<dbReference type="SMR" id="Q86AG7"/>
<dbReference type="FunCoup" id="Q86AG7">
    <property type="interactions" value="300"/>
</dbReference>
<dbReference type="STRING" id="44689.Q86AG7"/>
<dbReference type="PaxDb" id="44689-DDB0302479"/>
<dbReference type="EnsemblProtists" id="EAL71443">
    <property type="protein sequence ID" value="EAL71443"/>
    <property type="gene ID" value="DDB_G0272018"/>
</dbReference>
<dbReference type="GeneID" id="8618272"/>
<dbReference type="KEGG" id="ddi:DDB_G0272018"/>
<dbReference type="dictyBase" id="DDB_G0272018">
    <property type="gene designation" value="mvk"/>
</dbReference>
<dbReference type="VEuPathDB" id="AmoebaDB:DDB_G0272018"/>
<dbReference type="eggNOG" id="KOG1511">
    <property type="taxonomic scope" value="Eukaryota"/>
</dbReference>
<dbReference type="HOGENOM" id="CLU_017814_0_1_1"/>
<dbReference type="InParanoid" id="Q86AG7"/>
<dbReference type="OMA" id="LMDFNHG"/>
<dbReference type="PhylomeDB" id="Q86AG7"/>
<dbReference type="Reactome" id="R-DDI-191273">
    <property type="pathway name" value="Cholesterol biosynthesis"/>
</dbReference>
<dbReference type="UniPathway" id="UPA00057">
    <property type="reaction ID" value="UER00098"/>
</dbReference>
<dbReference type="PRO" id="PR:Q86AG7"/>
<dbReference type="Proteomes" id="UP000002195">
    <property type="component" value="Chromosome 2"/>
</dbReference>
<dbReference type="GO" id="GO:0005829">
    <property type="term" value="C:cytosol"/>
    <property type="evidence" value="ECO:0000318"/>
    <property type="project" value="GO_Central"/>
</dbReference>
<dbReference type="GO" id="GO:0005524">
    <property type="term" value="F:ATP binding"/>
    <property type="evidence" value="ECO:0000250"/>
    <property type="project" value="UniProtKB"/>
</dbReference>
<dbReference type="GO" id="GO:0000287">
    <property type="term" value="F:magnesium ion binding"/>
    <property type="evidence" value="ECO:0000250"/>
    <property type="project" value="UniProtKB"/>
</dbReference>
<dbReference type="GO" id="GO:0004496">
    <property type="term" value="F:mevalonate kinase activity"/>
    <property type="evidence" value="ECO:0000250"/>
    <property type="project" value="UniProtKB"/>
</dbReference>
<dbReference type="GO" id="GO:0019287">
    <property type="term" value="P:isopentenyl diphosphate biosynthetic process, mevalonate pathway"/>
    <property type="evidence" value="ECO:0000318"/>
    <property type="project" value="GO_Central"/>
</dbReference>
<dbReference type="GO" id="GO:0016310">
    <property type="term" value="P:phosphorylation"/>
    <property type="evidence" value="ECO:0000305"/>
    <property type="project" value="dictyBase"/>
</dbReference>
<dbReference type="GO" id="GO:0016126">
    <property type="term" value="P:sterol biosynthetic process"/>
    <property type="evidence" value="ECO:0007669"/>
    <property type="project" value="UniProtKB-KW"/>
</dbReference>
<dbReference type="FunFam" id="3.30.230.10:FF:000156">
    <property type="entry name" value="Mevalonate kinase"/>
    <property type="match status" value="1"/>
</dbReference>
<dbReference type="FunFam" id="3.30.70.890:FF:000003">
    <property type="entry name" value="Mevalonate kinase"/>
    <property type="match status" value="1"/>
</dbReference>
<dbReference type="Gene3D" id="3.30.230.10">
    <property type="match status" value="1"/>
</dbReference>
<dbReference type="Gene3D" id="3.30.70.890">
    <property type="entry name" value="GHMP kinase, C-terminal domain"/>
    <property type="match status" value="1"/>
</dbReference>
<dbReference type="InterPro" id="IPR013750">
    <property type="entry name" value="GHMP_kinase_C_dom"/>
</dbReference>
<dbReference type="InterPro" id="IPR036554">
    <property type="entry name" value="GHMP_kinase_C_sf"/>
</dbReference>
<dbReference type="InterPro" id="IPR006204">
    <property type="entry name" value="GHMP_kinase_N_dom"/>
</dbReference>
<dbReference type="InterPro" id="IPR006203">
    <property type="entry name" value="GHMP_knse_ATP-bd_CS"/>
</dbReference>
<dbReference type="InterPro" id="IPR006205">
    <property type="entry name" value="Mev_gal_kin"/>
</dbReference>
<dbReference type="InterPro" id="IPR020568">
    <property type="entry name" value="Ribosomal_Su5_D2-typ_SF"/>
</dbReference>
<dbReference type="InterPro" id="IPR014721">
    <property type="entry name" value="Ribsml_uS5_D2-typ_fold_subgr"/>
</dbReference>
<dbReference type="NCBIfam" id="TIGR00549">
    <property type="entry name" value="mevalon_kin"/>
    <property type="match status" value="1"/>
</dbReference>
<dbReference type="PANTHER" id="PTHR43290">
    <property type="entry name" value="MEVALONATE KINASE"/>
    <property type="match status" value="1"/>
</dbReference>
<dbReference type="PANTHER" id="PTHR43290:SF2">
    <property type="entry name" value="MEVALONATE KINASE"/>
    <property type="match status" value="1"/>
</dbReference>
<dbReference type="Pfam" id="PF08544">
    <property type="entry name" value="GHMP_kinases_C"/>
    <property type="match status" value="1"/>
</dbReference>
<dbReference type="Pfam" id="PF00288">
    <property type="entry name" value="GHMP_kinases_N"/>
    <property type="match status" value="1"/>
</dbReference>
<dbReference type="PRINTS" id="PR00959">
    <property type="entry name" value="MEVGALKINASE"/>
</dbReference>
<dbReference type="SUPFAM" id="SSF55060">
    <property type="entry name" value="GHMP Kinase, C-terminal domain"/>
    <property type="match status" value="1"/>
</dbReference>
<dbReference type="SUPFAM" id="SSF54211">
    <property type="entry name" value="Ribosomal protein S5 domain 2-like"/>
    <property type="match status" value="1"/>
</dbReference>
<dbReference type="PROSITE" id="PS00627">
    <property type="entry name" value="GHMP_KINASES_ATP"/>
    <property type="match status" value="1"/>
</dbReference>
<name>KIME_DICDI</name>